<keyword id="KW-0067">ATP-binding</keyword>
<keyword id="KW-0963">Cytoplasm</keyword>
<keyword id="KW-1015">Disulfide bond</keyword>
<keyword id="KW-0547">Nucleotide-binding</keyword>
<keyword id="KW-0694">RNA-binding</keyword>
<keyword id="KW-0808">Transferase</keyword>
<keyword id="KW-0819">tRNA processing</keyword>
<keyword id="KW-0820">tRNA-binding</keyword>
<evidence type="ECO:0000255" key="1">
    <source>
        <dbReference type="HAMAP-Rule" id="MF_00144"/>
    </source>
</evidence>
<sequence>MKVGVALSGGVDSAVALYLLLKEGHEVKAFHMKTKEDEFFIRKEIKKKVCCSPSDTADAMRIAHFLGVEIEIVDVKEIFREKVIEPFKSDLLKGLTPNPCVHCNRFVKFGYLMDYVLNQGFDAFASGHYARIEFSEKYGRKVIKKGVDLKKDQSYFLARIEPWRIERLIFPNGIYTKEEIRKIAEEAGIHVAKKQESQDVCFIPDGSIENFLKDEGITLKEGDLITPEGEVVGRHFGYPLYTIGQRKGFKIEKFGRRYYVRGKIPEKNVVVVSDLEDVFFSGLIAEDPVWHVEVPEEFKCVCRVRKKSEEAPAVVKLRDNEVEVRFEKKVFAVTPGQIAAFYDGDTLLGGAIIKEGIR</sequence>
<accession>A5IJQ4</accession>
<reference key="1">
    <citation type="submission" date="2007-05" db="EMBL/GenBank/DDBJ databases">
        <title>Complete sequence of Thermotoga petrophila RKU-1.</title>
        <authorList>
            <consortium name="US DOE Joint Genome Institute"/>
            <person name="Copeland A."/>
            <person name="Lucas S."/>
            <person name="Lapidus A."/>
            <person name="Barry K."/>
            <person name="Glavina del Rio T."/>
            <person name="Dalin E."/>
            <person name="Tice H."/>
            <person name="Pitluck S."/>
            <person name="Sims D."/>
            <person name="Brettin T."/>
            <person name="Bruce D."/>
            <person name="Detter J.C."/>
            <person name="Han C."/>
            <person name="Tapia R."/>
            <person name="Schmutz J."/>
            <person name="Larimer F."/>
            <person name="Land M."/>
            <person name="Hauser L."/>
            <person name="Kyrpides N."/>
            <person name="Mikhailova N."/>
            <person name="Nelson K."/>
            <person name="Gogarten J.P."/>
            <person name="Noll K."/>
            <person name="Richardson P."/>
        </authorList>
    </citation>
    <scope>NUCLEOTIDE SEQUENCE [LARGE SCALE GENOMIC DNA]</scope>
    <source>
        <strain>ATCC BAA-488 / DSM 13995 / JCM 10881 / RKU-1</strain>
    </source>
</reference>
<proteinExistence type="inferred from homology"/>
<comment type="function">
    <text evidence="1">Catalyzes the 2-thiolation of uridine at the wobble position (U34) of tRNA, leading to the formation of s(2)U34.</text>
</comment>
<comment type="catalytic activity">
    <reaction evidence="1">
        <text>S-sulfanyl-L-cysteinyl-[protein] + uridine(34) in tRNA + AH2 + ATP = 2-thiouridine(34) in tRNA + L-cysteinyl-[protein] + A + AMP + diphosphate + H(+)</text>
        <dbReference type="Rhea" id="RHEA:47032"/>
        <dbReference type="Rhea" id="RHEA-COMP:10131"/>
        <dbReference type="Rhea" id="RHEA-COMP:11726"/>
        <dbReference type="Rhea" id="RHEA-COMP:11727"/>
        <dbReference type="Rhea" id="RHEA-COMP:11728"/>
        <dbReference type="ChEBI" id="CHEBI:13193"/>
        <dbReference type="ChEBI" id="CHEBI:15378"/>
        <dbReference type="ChEBI" id="CHEBI:17499"/>
        <dbReference type="ChEBI" id="CHEBI:29950"/>
        <dbReference type="ChEBI" id="CHEBI:30616"/>
        <dbReference type="ChEBI" id="CHEBI:33019"/>
        <dbReference type="ChEBI" id="CHEBI:61963"/>
        <dbReference type="ChEBI" id="CHEBI:65315"/>
        <dbReference type="ChEBI" id="CHEBI:87170"/>
        <dbReference type="ChEBI" id="CHEBI:456215"/>
        <dbReference type="EC" id="2.8.1.13"/>
    </reaction>
</comment>
<comment type="subcellular location">
    <subcellularLocation>
        <location evidence="1">Cytoplasm</location>
    </subcellularLocation>
</comment>
<comment type="similarity">
    <text evidence="1">Belongs to the MnmA/TRMU family.</text>
</comment>
<gene>
    <name evidence="1" type="primary">mnmA</name>
    <name type="synonym">trmU</name>
    <name type="ordered locus">Tpet_0401</name>
</gene>
<organism>
    <name type="scientific">Thermotoga petrophila (strain ATCC BAA-488 / DSM 13995 / JCM 10881 / RKU-1)</name>
    <dbReference type="NCBI Taxonomy" id="390874"/>
    <lineage>
        <taxon>Bacteria</taxon>
        <taxon>Thermotogati</taxon>
        <taxon>Thermotogota</taxon>
        <taxon>Thermotogae</taxon>
        <taxon>Thermotogales</taxon>
        <taxon>Thermotogaceae</taxon>
        <taxon>Thermotoga</taxon>
    </lineage>
</organism>
<feature type="chain" id="PRO_1000009592" description="tRNA-specific 2-thiouridylase MnmA">
    <location>
        <begin position="1"/>
        <end position="358"/>
    </location>
</feature>
<feature type="region of interest" description="Interaction with tRNA" evidence="1">
    <location>
        <begin position="151"/>
        <end position="153"/>
    </location>
</feature>
<feature type="active site" description="Nucleophile" evidence="1">
    <location>
        <position position="103"/>
    </location>
</feature>
<feature type="active site" description="Cysteine persulfide intermediate" evidence="1">
    <location>
        <position position="201"/>
    </location>
</feature>
<feature type="binding site" evidence="1">
    <location>
        <begin position="6"/>
        <end position="13"/>
    </location>
    <ligand>
        <name>ATP</name>
        <dbReference type="ChEBI" id="CHEBI:30616"/>
    </ligand>
</feature>
<feature type="binding site" evidence="1">
    <location>
        <position position="32"/>
    </location>
    <ligand>
        <name>ATP</name>
        <dbReference type="ChEBI" id="CHEBI:30616"/>
    </ligand>
</feature>
<feature type="binding site" evidence="1">
    <location>
        <position position="127"/>
    </location>
    <ligand>
        <name>ATP</name>
        <dbReference type="ChEBI" id="CHEBI:30616"/>
    </ligand>
</feature>
<feature type="site" description="Interaction with tRNA" evidence="1">
    <location>
        <position position="128"/>
    </location>
</feature>
<feature type="site" description="Interaction with tRNA" evidence="1">
    <location>
        <position position="337"/>
    </location>
</feature>
<feature type="disulfide bond" description="Alternate" evidence="1">
    <location>
        <begin position="103"/>
        <end position="201"/>
    </location>
</feature>
<dbReference type="EC" id="2.8.1.13" evidence="1"/>
<dbReference type="EMBL" id="CP000702">
    <property type="protein sequence ID" value="ABQ46427.1"/>
    <property type="molecule type" value="Genomic_DNA"/>
</dbReference>
<dbReference type="RefSeq" id="WP_011943054.1">
    <property type="nucleotide sequence ID" value="NC_009486.1"/>
</dbReference>
<dbReference type="SMR" id="A5IJQ4"/>
<dbReference type="STRING" id="390874.Tpet_0401"/>
<dbReference type="KEGG" id="tpt:Tpet_0401"/>
<dbReference type="eggNOG" id="COG0482">
    <property type="taxonomic scope" value="Bacteria"/>
</dbReference>
<dbReference type="HOGENOM" id="CLU_035188_0_0_0"/>
<dbReference type="Proteomes" id="UP000006558">
    <property type="component" value="Chromosome"/>
</dbReference>
<dbReference type="GO" id="GO:0005737">
    <property type="term" value="C:cytoplasm"/>
    <property type="evidence" value="ECO:0007669"/>
    <property type="project" value="UniProtKB-SubCell"/>
</dbReference>
<dbReference type="GO" id="GO:0005524">
    <property type="term" value="F:ATP binding"/>
    <property type="evidence" value="ECO:0007669"/>
    <property type="project" value="UniProtKB-KW"/>
</dbReference>
<dbReference type="GO" id="GO:0000049">
    <property type="term" value="F:tRNA binding"/>
    <property type="evidence" value="ECO:0007669"/>
    <property type="project" value="UniProtKB-KW"/>
</dbReference>
<dbReference type="GO" id="GO:0103016">
    <property type="term" value="F:tRNA-uridine 2-sulfurtransferase activity"/>
    <property type="evidence" value="ECO:0007669"/>
    <property type="project" value="UniProtKB-EC"/>
</dbReference>
<dbReference type="GO" id="GO:0002143">
    <property type="term" value="P:tRNA wobble position uridine thiolation"/>
    <property type="evidence" value="ECO:0007669"/>
    <property type="project" value="TreeGrafter"/>
</dbReference>
<dbReference type="CDD" id="cd01998">
    <property type="entry name" value="MnmA_TRMU-like"/>
    <property type="match status" value="1"/>
</dbReference>
<dbReference type="FunFam" id="2.30.30.280:FF:000001">
    <property type="entry name" value="tRNA-specific 2-thiouridylase MnmA"/>
    <property type="match status" value="1"/>
</dbReference>
<dbReference type="FunFam" id="2.40.30.10:FF:000242">
    <property type="entry name" value="tRNA-specific 2-thiouridylase MnmA"/>
    <property type="match status" value="1"/>
</dbReference>
<dbReference type="FunFam" id="3.40.50.620:FF:000302">
    <property type="entry name" value="tRNA-specific 2-thiouridylase MnmA"/>
    <property type="match status" value="1"/>
</dbReference>
<dbReference type="Gene3D" id="2.30.30.280">
    <property type="entry name" value="Adenine nucleotide alpha hydrolases-like domains"/>
    <property type="match status" value="1"/>
</dbReference>
<dbReference type="Gene3D" id="3.40.50.620">
    <property type="entry name" value="HUPs"/>
    <property type="match status" value="1"/>
</dbReference>
<dbReference type="Gene3D" id="2.40.30.10">
    <property type="entry name" value="Translation factors"/>
    <property type="match status" value="1"/>
</dbReference>
<dbReference type="HAMAP" id="MF_00144">
    <property type="entry name" value="tRNA_thiouridyl_MnmA"/>
    <property type="match status" value="1"/>
</dbReference>
<dbReference type="InterPro" id="IPR004506">
    <property type="entry name" value="MnmA-like"/>
</dbReference>
<dbReference type="InterPro" id="IPR046885">
    <property type="entry name" value="MnmA-like_C"/>
</dbReference>
<dbReference type="InterPro" id="IPR046884">
    <property type="entry name" value="MnmA-like_central"/>
</dbReference>
<dbReference type="InterPro" id="IPR023382">
    <property type="entry name" value="MnmA-like_central_sf"/>
</dbReference>
<dbReference type="InterPro" id="IPR014729">
    <property type="entry name" value="Rossmann-like_a/b/a_fold"/>
</dbReference>
<dbReference type="NCBIfam" id="NF001138">
    <property type="entry name" value="PRK00143.1"/>
    <property type="match status" value="1"/>
</dbReference>
<dbReference type="NCBIfam" id="TIGR00420">
    <property type="entry name" value="trmU"/>
    <property type="match status" value="1"/>
</dbReference>
<dbReference type="PANTHER" id="PTHR11933:SF5">
    <property type="entry name" value="MITOCHONDRIAL TRNA-SPECIFIC 2-THIOURIDYLASE 1"/>
    <property type="match status" value="1"/>
</dbReference>
<dbReference type="PANTHER" id="PTHR11933">
    <property type="entry name" value="TRNA 5-METHYLAMINOMETHYL-2-THIOURIDYLATE -METHYLTRANSFERASE"/>
    <property type="match status" value="1"/>
</dbReference>
<dbReference type="Pfam" id="PF03054">
    <property type="entry name" value="tRNA_Me_trans"/>
    <property type="match status" value="1"/>
</dbReference>
<dbReference type="Pfam" id="PF20258">
    <property type="entry name" value="tRNA_Me_trans_C"/>
    <property type="match status" value="1"/>
</dbReference>
<dbReference type="Pfam" id="PF20259">
    <property type="entry name" value="tRNA_Me_trans_M"/>
    <property type="match status" value="1"/>
</dbReference>
<dbReference type="SUPFAM" id="SSF52402">
    <property type="entry name" value="Adenine nucleotide alpha hydrolases-like"/>
    <property type="match status" value="1"/>
</dbReference>
<protein>
    <recommendedName>
        <fullName evidence="1">tRNA-specific 2-thiouridylase MnmA</fullName>
        <ecNumber evidence="1">2.8.1.13</ecNumber>
    </recommendedName>
</protein>
<name>MNMA_THEP1</name>